<accession>B7JDM6</accession>
<gene>
    <name evidence="1" type="primary">hemE</name>
    <name type="ordered locus">BCAH820_1152</name>
</gene>
<organism>
    <name type="scientific">Bacillus cereus (strain AH820)</name>
    <dbReference type="NCBI Taxonomy" id="405535"/>
    <lineage>
        <taxon>Bacteria</taxon>
        <taxon>Bacillati</taxon>
        <taxon>Bacillota</taxon>
        <taxon>Bacilli</taxon>
        <taxon>Bacillales</taxon>
        <taxon>Bacillaceae</taxon>
        <taxon>Bacillus</taxon>
        <taxon>Bacillus cereus group</taxon>
    </lineage>
</organism>
<feature type="chain" id="PRO_1000197508" description="Uroporphyrinogen decarboxylase">
    <location>
        <begin position="1"/>
        <end position="348"/>
    </location>
</feature>
<feature type="binding site" evidence="1">
    <location>
        <begin position="27"/>
        <end position="31"/>
    </location>
    <ligand>
        <name>substrate</name>
    </ligand>
</feature>
<feature type="binding site" evidence="1">
    <location>
        <position position="46"/>
    </location>
    <ligand>
        <name>substrate</name>
    </ligand>
</feature>
<feature type="binding site" evidence="1">
    <location>
        <position position="76"/>
    </location>
    <ligand>
        <name>substrate</name>
    </ligand>
</feature>
<feature type="binding site" evidence="1">
    <location>
        <position position="152"/>
    </location>
    <ligand>
        <name>substrate</name>
    </ligand>
</feature>
<feature type="binding site" evidence="1">
    <location>
        <position position="207"/>
    </location>
    <ligand>
        <name>substrate</name>
    </ligand>
</feature>
<feature type="binding site" evidence="1">
    <location>
        <position position="320"/>
    </location>
    <ligand>
        <name>substrate</name>
    </ligand>
</feature>
<feature type="site" description="Transition state stabilizer" evidence="1">
    <location>
        <position position="76"/>
    </location>
</feature>
<proteinExistence type="inferred from homology"/>
<keyword id="KW-0963">Cytoplasm</keyword>
<keyword id="KW-0210">Decarboxylase</keyword>
<keyword id="KW-0456">Lyase</keyword>
<keyword id="KW-0627">Porphyrin biosynthesis</keyword>
<dbReference type="EC" id="4.1.1.37" evidence="1"/>
<dbReference type="EMBL" id="CP001283">
    <property type="protein sequence ID" value="ACK90621.1"/>
    <property type="molecule type" value="Genomic_DNA"/>
</dbReference>
<dbReference type="RefSeq" id="WP_000252615.1">
    <property type="nucleotide sequence ID" value="NC_011773.1"/>
</dbReference>
<dbReference type="SMR" id="B7JDM6"/>
<dbReference type="KEGG" id="bcu:BCAH820_1152"/>
<dbReference type="HOGENOM" id="CLU_040933_0_1_9"/>
<dbReference type="UniPathway" id="UPA00251">
    <property type="reaction ID" value="UER00321"/>
</dbReference>
<dbReference type="Proteomes" id="UP000001363">
    <property type="component" value="Chromosome"/>
</dbReference>
<dbReference type="GO" id="GO:0005829">
    <property type="term" value="C:cytosol"/>
    <property type="evidence" value="ECO:0007669"/>
    <property type="project" value="TreeGrafter"/>
</dbReference>
<dbReference type="GO" id="GO:0004853">
    <property type="term" value="F:uroporphyrinogen decarboxylase activity"/>
    <property type="evidence" value="ECO:0007669"/>
    <property type="project" value="UniProtKB-UniRule"/>
</dbReference>
<dbReference type="GO" id="GO:0006782">
    <property type="term" value="P:protoporphyrinogen IX biosynthetic process"/>
    <property type="evidence" value="ECO:0007669"/>
    <property type="project" value="UniProtKB-UniRule"/>
</dbReference>
<dbReference type="CDD" id="cd00717">
    <property type="entry name" value="URO-D"/>
    <property type="match status" value="1"/>
</dbReference>
<dbReference type="FunFam" id="3.20.20.210:FF:000005">
    <property type="entry name" value="Uroporphyrinogen decarboxylase"/>
    <property type="match status" value="1"/>
</dbReference>
<dbReference type="Gene3D" id="3.20.20.210">
    <property type="match status" value="1"/>
</dbReference>
<dbReference type="HAMAP" id="MF_00218">
    <property type="entry name" value="URO_D"/>
    <property type="match status" value="1"/>
</dbReference>
<dbReference type="InterPro" id="IPR038071">
    <property type="entry name" value="UROD/MetE-like_sf"/>
</dbReference>
<dbReference type="InterPro" id="IPR006361">
    <property type="entry name" value="Uroporphyrinogen_deCO2ase_HemE"/>
</dbReference>
<dbReference type="InterPro" id="IPR000257">
    <property type="entry name" value="Uroporphyrinogen_deCOase"/>
</dbReference>
<dbReference type="NCBIfam" id="TIGR01464">
    <property type="entry name" value="hemE"/>
    <property type="match status" value="1"/>
</dbReference>
<dbReference type="PANTHER" id="PTHR21091">
    <property type="entry name" value="METHYLTETRAHYDROFOLATE:HOMOCYSTEINE METHYLTRANSFERASE RELATED"/>
    <property type="match status" value="1"/>
</dbReference>
<dbReference type="PANTHER" id="PTHR21091:SF169">
    <property type="entry name" value="UROPORPHYRINOGEN DECARBOXYLASE"/>
    <property type="match status" value="1"/>
</dbReference>
<dbReference type="Pfam" id="PF01208">
    <property type="entry name" value="URO-D"/>
    <property type="match status" value="1"/>
</dbReference>
<dbReference type="SUPFAM" id="SSF51726">
    <property type="entry name" value="UROD/MetE-like"/>
    <property type="match status" value="1"/>
</dbReference>
<dbReference type="PROSITE" id="PS00906">
    <property type="entry name" value="UROD_1"/>
    <property type="match status" value="1"/>
</dbReference>
<dbReference type="PROSITE" id="PS00907">
    <property type="entry name" value="UROD_2"/>
    <property type="match status" value="1"/>
</dbReference>
<reference key="1">
    <citation type="submission" date="2008-10" db="EMBL/GenBank/DDBJ databases">
        <title>Genome sequence of Bacillus cereus AH820.</title>
        <authorList>
            <person name="Dodson R.J."/>
            <person name="Durkin A.S."/>
            <person name="Rosovitz M.J."/>
            <person name="Rasko D.A."/>
            <person name="Hoffmaster A."/>
            <person name="Ravel J."/>
            <person name="Sutton G."/>
        </authorList>
    </citation>
    <scope>NUCLEOTIDE SEQUENCE [LARGE SCALE GENOMIC DNA]</scope>
    <source>
        <strain>AH820</strain>
    </source>
</reference>
<sequence length="348" mass="39238">MVRTINETFLKACRGERTDYVPAWYMRQAGRSQPEYRKIKEKYSLFEITHNPELCAYVTKLPVDQYNVDAAILYKDIMSPLPAIGVDVEIKSGIGPVIDNPIRSLQDVEKLGEINPEDDVPYILDTIRLLTTEMLDVPLIGFSGAPFTLASYMIEGGPSRNYHNTKAFMYAEPKAWFALMDKLADMVITYLKAQINAGAKAVQIFDSWVGTVNVADYRVFIKPAMERIFAEVRTMGVPMIMHGVGAPHLVNEWHDLPLDVVGLDWRLPIEEARARGVHKAVQGNMDPSFLLAPWSVIEEHVKGILDQGMKQPGYIFNLGHGVFPEVNPDTLKRLTTFIHEYSKGQLAK</sequence>
<name>DCUP_BACC0</name>
<comment type="function">
    <text evidence="1">Catalyzes the decarboxylation of four acetate groups of uroporphyrinogen-III to yield coproporphyrinogen-III.</text>
</comment>
<comment type="catalytic activity">
    <reaction evidence="1">
        <text>uroporphyrinogen III + 4 H(+) = coproporphyrinogen III + 4 CO2</text>
        <dbReference type="Rhea" id="RHEA:19865"/>
        <dbReference type="ChEBI" id="CHEBI:15378"/>
        <dbReference type="ChEBI" id="CHEBI:16526"/>
        <dbReference type="ChEBI" id="CHEBI:57308"/>
        <dbReference type="ChEBI" id="CHEBI:57309"/>
        <dbReference type="EC" id="4.1.1.37"/>
    </reaction>
</comment>
<comment type="pathway">
    <text evidence="1">Porphyrin-containing compound metabolism; protoporphyrin-IX biosynthesis; coproporphyrinogen-III from 5-aminolevulinate: step 4/4.</text>
</comment>
<comment type="subunit">
    <text evidence="1">Homodimer.</text>
</comment>
<comment type="subcellular location">
    <subcellularLocation>
        <location evidence="1">Cytoplasm</location>
    </subcellularLocation>
</comment>
<comment type="similarity">
    <text evidence="1">Belongs to the uroporphyrinogen decarboxylase family.</text>
</comment>
<protein>
    <recommendedName>
        <fullName evidence="1">Uroporphyrinogen decarboxylase</fullName>
        <shortName evidence="1">UPD</shortName>
        <shortName evidence="1">URO-D</shortName>
        <ecNumber evidence="1">4.1.1.37</ecNumber>
    </recommendedName>
</protein>
<evidence type="ECO:0000255" key="1">
    <source>
        <dbReference type="HAMAP-Rule" id="MF_00218"/>
    </source>
</evidence>